<proteinExistence type="evidence at protein level"/>
<organism>
    <name type="scientific">Pinus strobus</name>
    <name type="common">Eastern white pine</name>
    <dbReference type="NCBI Taxonomy" id="3348"/>
    <lineage>
        <taxon>Eukaryota</taxon>
        <taxon>Viridiplantae</taxon>
        <taxon>Streptophyta</taxon>
        <taxon>Embryophyta</taxon>
        <taxon>Tracheophyta</taxon>
        <taxon>Spermatophyta</taxon>
        <taxon>Pinopsida</taxon>
        <taxon>Pinidae</taxon>
        <taxon>Conifers I</taxon>
        <taxon>Pinales</taxon>
        <taxon>Pinaceae</taxon>
        <taxon>Pinus</taxon>
        <taxon>Pinus subgen. Strobus</taxon>
    </lineage>
</organism>
<protein>
    <recommendedName>
        <fullName>Putative NAD(P)-dependent glyceraldehyde-3-phosphate dehydrogenase PS5</fullName>
        <ecNumber>1.2.1.-</ecNumber>
    </recommendedName>
</protein>
<comment type="miscellaneous">
    <text evidence="1">On the 2D-gel the determined pI of this protein is: 3.7, its MW is: 35.1 kDa.</text>
</comment>
<comment type="caution">
    <text evidence="1">The order of the peptides shown is unknown.</text>
</comment>
<evidence type="ECO:0000269" key="1">
    <source>
    </source>
</evidence>
<evidence type="ECO:0000303" key="2">
    <source>
    </source>
</evidence>
<evidence type="ECO:0000305" key="3"/>
<feature type="chain" id="PRO_0000240614" description="Putative NAD(P)-dependent glyceraldehyde-3-phosphate dehydrogenase PS5">
    <location>
        <begin position="1" status="less than"/>
        <end position="40" status="greater than"/>
    </location>
</feature>
<feature type="non-consecutive residues" evidence="2">
    <location>
        <begin position="8"/>
        <end position="9"/>
    </location>
</feature>
<feature type="non-consecutive residues" evidence="2">
    <location>
        <begin position="18"/>
        <end position="19"/>
    </location>
</feature>
<feature type="non-consecutive residues" evidence="2">
    <location>
        <begin position="26"/>
        <end position="27"/>
    </location>
</feature>
<feature type="non-terminal residue" evidence="2">
    <location>
        <position position="1"/>
    </location>
</feature>
<feature type="non-terminal residue" evidence="2">
    <location>
        <position position="40"/>
    </location>
</feature>
<name>PS5_PINST</name>
<accession>P84721</accession>
<dbReference type="EC" id="1.2.1.-"/>
<dbReference type="GO" id="GO:0016491">
    <property type="term" value="F:oxidoreductase activity"/>
    <property type="evidence" value="ECO:0007669"/>
    <property type="project" value="UniProtKB-KW"/>
</dbReference>
<reference evidence="3" key="1">
    <citation type="journal article" date="2006" name="Mol. Plant Microbe Interact.">
        <title>Proteomic comparison of needles from blister rust-resistant and susceptible Pinus strobus seedlings reveals upregulation of putative disease resistance proteins.</title>
        <authorList>
            <person name="Smith J.A."/>
            <person name="Blanchette R.A."/>
            <person name="Burnes T.A."/>
            <person name="Jacobs J.J."/>
            <person name="Higgins L."/>
            <person name="Witthuhn B.A."/>
            <person name="David A.J."/>
            <person name="Gillman J.H."/>
        </authorList>
    </citation>
    <scope>PROTEIN SEQUENCE</scope>
    <source>
        <tissue evidence="1">Leaf</tissue>
    </source>
</reference>
<keyword id="KW-0903">Direct protein sequencing</keyword>
<keyword id="KW-0560">Oxidoreductase</keyword>
<sequence length="40" mass="4315">LVSMVDERAVAWRAHAMGNPVNLPWKLAAANLVPTSTAQK</sequence>